<accession>G1XSR7</accession>
<name>AO415_ARTOA</name>
<gene>
    <name evidence="4" type="primary">Ao415</name>
    <name type="ORF">AOL_s00215g415</name>
</gene>
<protein>
    <recommendedName>
        <fullName evidence="4">Nonribosomal peptide synthetase Ao415</fullName>
        <shortName evidence="4">NPRS Ao415</shortName>
        <ecNumber evidence="6">6.3.2.-</ecNumber>
    </recommendedName>
    <alternativeName>
        <fullName evidence="4">Desferriferrichrome synthetase</fullName>
    </alternativeName>
</protein>
<organism>
    <name type="scientific">Arthrobotrys oligospora (strain ATCC 24927 / CBS 115.81 / DSM 1491)</name>
    <name type="common">Nematode-trapping fungus</name>
    <name type="synonym">Didymozoophaga oligospora</name>
    <dbReference type="NCBI Taxonomy" id="756982"/>
    <lineage>
        <taxon>Eukaryota</taxon>
        <taxon>Fungi</taxon>
        <taxon>Dikarya</taxon>
        <taxon>Ascomycota</taxon>
        <taxon>Pezizomycotina</taxon>
        <taxon>Orbiliomycetes</taxon>
        <taxon>Orbiliales</taxon>
        <taxon>Orbiliaceae</taxon>
        <taxon>Orbilia</taxon>
        <taxon>Orbilia oligospora</taxon>
    </lineage>
</organism>
<sequence>MRTDLPQTMQRATAVPVVFPNLTGRAVPPPRGSRTSQKCLVTYSIPLSTLGERCDALGVSVGYLSQSIWARLLSQYTGEPEVSFGAFLSESPIPEEERGSCLCKLWRKSAYSVEVAFSPGKTDDDVRRELENGPRGNRKDVYESVISVYSAESENPYLARAAADSEFIVHLEIMLNKRTDQVRLAVHYDPAFVTGDSALIIAREFLGILTFESLGSGRTTRYSNLQPEILSMCQPSGNAPVDISDRNLFVHHLFEKHAAETPENSCLEFLHDETDQVESWTFKKLNETSNRIAHLILQNGVARDEAVPVCLDKGPLYYACILACMKAGVPFTPIDPVAPVARKTFMIEELQARYVLSIPDRFDELGLDENVKILDLSNEESLGKLSPQNPQVPDLTERSLAYRLYTSGSTGQPKAVSLEVGAVVHAIQKSIALLPLRRDSRLLQFAAITFDMCYFDCFLAWTVGFTMVSASKRYLLGELEATVKRLQISFLDLTPSVAATLTASELPEVEMLYCIGEAMPTKIVEDWAGRCVNSYGPTEAAMLCTIVNVDKDIRAANFGQPFNGMSLYILDKDMPVILPRMAAGELCICGPQLAREYHRNEAKTASSFITLDSGLRLYRTGDLARMLADGTFEFIGRKDDQVKLRGFRIELGEVSAVLRDVHPLIKDVVALVLKHSDEQKEQLVTFLSFASRKNRLDPPSIQDCDPADWEDIERAARKVAEAALPQYMLPHIYFPINWIPLSAAAKVDKRSLGELFRRTDISTLGRRAEAGASDEVFDELSTKIRHVFAEASSSELETIGMDTTIYQLGLDSISALNVARSLKAIGVNASVLDIIECPTIRGLRDHVSGKKNPISASYHQDIFASFKQQHIDAVCSSTSVPREKVANVLPCSPMQEGILTQFLQSKGSLYYNAILFRLENGVNIECLEDSWIQVAEQNDVLRTGFVEHEVDGGHYAMITYKSASTSLVRKVQTQIPVEEFVKQVQKEEAQKALSNIALPPWSVTLVPGENASHMIFTALHAIYDAQTLQILLNDVNLFYHKTQPVLHSSPSSILKEMLKISRDKEAVASAAKYWKSVLQDCPITKFPVMTPLREDTGEFVYSYKKCDTTMKQVEDMCKKVGFSFGAVGQAVWAKLLAMYFGERDICFGTVVSGRTGSDNAEDVVFPCLTTIPMRVQLDGDNKALVAQIQGRLSKTLKFQHTPLRAIQKALGHPEQGLFDTIFVYQKSSNSNERLRPVWRELDAKATVEYPVSFEIEPTDDGHLGLRLTGRTDILPQEQMEIMVAQYEYCLLHMLQNQAVDAMDLGDVPQPILSDTPAEFDKLTCDVKFLHEFVSASTKRHPSKLALEFATEIQGNNVTKDSWTYRQFDDMGNKIANFLLQHGAATGDLIGICFDKTPQAYFGILGILKAGCAFVALDFSAPVQRRSFIVQDAKIRIVLTMAQFAKDFDGISGLNVYSLDSLQTLTRYFSTEEPEIIDLTPDHLSYVLYTSGTTGTPKGCRITHDNAVQAMLSFQTLFKGHWDENSRFLQFASLHFDVSVLEQYWSWSVGVCLTGAPRDLIFQDLGNAIRALQITHIDLTPSLARLITPEDCPTLCRGVFITGGEKLKQDVLDAWGEENVIYNGYGPTEATIGVTMYPRVPRNGRPSNIGPQFVNVGSMVLKPKTMIPVLQGAVGELCVTGALVGDGYLNRQDLTEEKFPWVNGKRMYRTGDLVRQLHNGCFDYLGRADDQVKLRGQRLELGEINETIRSADKDVAEIVTLVCQHGQQQVQQLVSFVSFKSNTDGRGSPAPTQLLHSFPDAETGSRILQACQSRLPVYMVPTYILPITKLPLTVNNKVDERTLRNLFANTSMEVIQSFEEMSSGDEELSETEKVIRDTLGEVSIDTNSVSKNVSFFQLGLDSVSIVGFSNRLRRKGFQNIEVSLVMQNSTIASLAKALSSANGLAAGENIQNALQSIKAFNIEHGFEVCSSLGLNEEDIESIKPCTPLQEGMIARALNSDVPLYYNTFCFEVSRNTTPEALKKAWQEIVDRTDILRTCFCETSDGIAQVVLKKSEVQWKSVHGSQHEPLGNSRTKPLEMMDFAIPPVSLEYISGQTNFLRLSLFHALYDGTSMPMILSDIETLLSGHQPAKRMQFTDAVPRILSLDTAAAKKFWVDHFEEAKTSLLEPKSQVKELKEQIISHTLEASKSDVERVARDLGCTTQALFQVACLQALVRVQEKQVVMGIITSGRSFTVDGIDTCIGPLFNSIPCHLPISKGATWKEYAQKAHTFNISSIPFHHTPLRQISKWVGQGSKPLFDVLFVFQPATPLAEDRALREIDSAAILDYPVALEIQQGTDGRYTISVSSSSAYLDESENSLLLKSIVRGITDLLKNPEQEVAVLREIEGDVFHSKSEENQVKRPATPQPANFVWTEAAVSIRRELAILTGVEESAITEKSSIYQVGLDSVEAIRLSSRLLKKNIHLKVSDIMREATIERMVVYLSSTKSQTSSSDVKKNTLQKFETSAQKALKLSNDSLKKVESILPTTPLQDIMIAESIGSDFALYFNHDVLELQRGINIKKLQAAWKAVIKKNSILRTTFEEAHDLELGTSTDYIQIVWKDLSLEWDVVETTSEHESGRVDELMASHKSRKAPLALGIVRSDKRVLMVLSISHALYDGRSIGLLLDDVAREYDKQSTVRPDYKPFLEKVLNQDSKSSLGFWKHLLSNAKPRTFPVVGNDGQVWKAEQSSKVSVAKFAQFCREQKISEPVLGQACLSLLLSDIFSQDDVVFGTVISGRETEESEQYMFPTMNTIPVRAVLHGNVSDVLNSMQKSYSRSLEHQFVPLRDIQKNVCEPGQRMFDALFVYQKNKGSEEGVKLWRSIGGASQIEYAIAVEIEVNGDDLTWRISASETAMASHEAEDTLDTLDAMLQKIIGNPLWGYQRFTRSQLGNNLRAKLQSEMTRSVDVEESPSESDNYQNLERQVIKAISAIAKAAEQDIKPSTSIFHLGIDSISAIRLASELRKHSIFIAVSEILRESTVRKICLFLDKKQHTPNSSQKPTKQPEISPVQFKKVVAAAGLKNADVEYVSPATSGQIFLIKAWESSEGRIFLPTFSFKSAEVLRSPRLKRALDRLVSANPILRTSFAADGDDIFQIVHRQASPSFRSTYFDSDSVLESSLQQINQEEQVREYDMSTPSIRVHLVSSRNESYVFVTLHHALYDAFTLPTLLSQLSDLYKNEEMVLPKSSKSVLAPSSSSPEAKDFWIRYFTNSESTPLPSKQDVGVTERVELYTERQVPSGSQIDAACRKHGISLHSLSIACFAQIISKVVQKDSPIFGIYLSNRHLSDASEGVQTMPTLNMVPLMVKGASKSPLIDLAKQVQEDLLKISTSDAATTNLMEIYQWTGIRIDSFVNFLKEDKLDGNSRDGGLFERFELSAGTPAARDFSIPGALRSKDTVIQTNLDLEMALRNGFVDVGLFAAKKYLDNIDLRKISEEIKEGLMHFE</sequence>
<feature type="chain" id="PRO_0000461390" description="Nonribosomal peptide synthetase Ao415">
    <location>
        <begin position="1"/>
        <end position="3483"/>
    </location>
</feature>
<feature type="domain" description="Carrier 1" evidence="2">
    <location>
        <begin position="775"/>
        <end position="851"/>
    </location>
</feature>
<feature type="domain" description="Carrier 2" evidence="2">
    <location>
        <begin position="1865"/>
        <end position="1941"/>
    </location>
</feature>
<feature type="domain" description="Carrier 3" evidence="2">
    <location>
        <begin position="2412"/>
        <end position="2485"/>
    </location>
</feature>
<feature type="domain" description="Carrier 4" evidence="2">
    <location>
        <begin position="2954"/>
        <end position="3030"/>
    </location>
</feature>
<feature type="region of interest" description="Adenylation 1" evidence="1 6">
    <location>
        <begin position="281"/>
        <end position="669"/>
    </location>
</feature>
<feature type="region of interest" description="Condensation 1" evidence="1 6">
    <location>
        <begin position="886"/>
        <end position="1297"/>
    </location>
</feature>
<feature type="region of interest" description="Adenylation 2" evidence="1 6">
    <location>
        <begin position="1363"/>
        <end position="1758"/>
    </location>
</feature>
<feature type="region of interest" description="Condensation 2" evidence="1 6">
    <location>
        <begin position="1981"/>
        <end position="2379"/>
    </location>
</feature>
<feature type="region of interest" description="Condensation 3" evidence="1 6">
    <location>
        <begin position="2520"/>
        <end position="2917"/>
    </location>
</feature>
<feature type="region of interest" description="Condensation 4" evidence="1 6">
    <location>
        <begin position="3084"/>
        <end position="3368"/>
    </location>
</feature>
<feature type="modified residue" description="O-(pantetheine 4'-phosphoryl)serine" evidence="2">
    <location>
        <position position="812"/>
    </location>
</feature>
<feature type="modified residue" description="O-(pantetheine 4'-phosphoryl)serine" evidence="2">
    <location>
        <position position="1901"/>
    </location>
</feature>
<feature type="modified residue" description="O-(pantetheine 4'-phosphoryl)serine" evidence="2">
    <location>
        <position position="2446"/>
    </location>
</feature>
<feature type="modified residue" description="O-(pantetheine 4'-phosphoryl)serine" evidence="2">
    <location>
        <position position="2991"/>
    </location>
</feature>
<dbReference type="EC" id="6.3.2.-" evidence="6"/>
<dbReference type="EMBL" id="ADOT01000316">
    <property type="protein sequence ID" value="EGX43679.1"/>
    <property type="molecule type" value="Genomic_DNA"/>
</dbReference>
<dbReference type="RefSeq" id="XP_011127919.1">
    <property type="nucleotide sequence ID" value="XM_011129617.1"/>
</dbReference>
<dbReference type="SMR" id="G1XSR7"/>
<dbReference type="STRING" id="756982.G1XSR7"/>
<dbReference type="GeneID" id="22898841"/>
<dbReference type="eggNOG" id="KOG1178">
    <property type="taxonomic scope" value="Eukaryota"/>
</dbReference>
<dbReference type="HOGENOM" id="CLU_000092_1_0_1"/>
<dbReference type="InParanoid" id="G1XSR7"/>
<dbReference type="OMA" id="CTMLPRM"/>
<dbReference type="OrthoDB" id="1996824at4890"/>
<dbReference type="Proteomes" id="UP000008784">
    <property type="component" value="Unassembled WGS sequence"/>
</dbReference>
<dbReference type="GO" id="GO:0005737">
    <property type="term" value="C:cytoplasm"/>
    <property type="evidence" value="ECO:0007669"/>
    <property type="project" value="TreeGrafter"/>
</dbReference>
<dbReference type="GO" id="GO:0016874">
    <property type="term" value="F:ligase activity"/>
    <property type="evidence" value="ECO:0007669"/>
    <property type="project" value="UniProtKB-KW"/>
</dbReference>
<dbReference type="GO" id="GO:0031177">
    <property type="term" value="F:phosphopantetheine binding"/>
    <property type="evidence" value="ECO:0007669"/>
    <property type="project" value="InterPro"/>
</dbReference>
<dbReference type="GO" id="GO:0043041">
    <property type="term" value="P:amino acid activation for nonribosomal peptide biosynthetic process"/>
    <property type="evidence" value="ECO:0007669"/>
    <property type="project" value="TreeGrafter"/>
</dbReference>
<dbReference type="GO" id="GO:0044550">
    <property type="term" value="P:secondary metabolite biosynthetic process"/>
    <property type="evidence" value="ECO:0007669"/>
    <property type="project" value="TreeGrafter"/>
</dbReference>
<dbReference type="CDD" id="cd05918">
    <property type="entry name" value="A_NRPS_SidN3_like"/>
    <property type="match status" value="2"/>
</dbReference>
<dbReference type="CDD" id="cd19542">
    <property type="entry name" value="CT_NRPS-like"/>
    <property type="match status" value="3"/>
</dbReference>
<dbReference type="FunFam" id="3.30.300.30:FF:000033">
    <property type="entry name" value="Nonribosomal siderophore peptide synthase SidC"/>
    <property type="match status" value="2"/>
</dbReference>
<dbReference type="FunFam" id="3.40.50.12780:FF:000024">
    <property type="entry name" value="Nonribosomal siderophore peptide synthase SidC"/>
    <property type="match status" value="2"/>
</dbReference>
<dbReference type="Gene3D" id="3.30.300.30">
    <property type="match status" value="2"/>
</dbReference>
<dbReference type="Gene3D" id="1.10.1200.10">
    <property type="entry name" value="ACP-like"/>
    <property type="match status" value="4"/>
</dbReference>
<dbReference type="Gene3D" id="3.30.559.10">
    <property type="entry name" value="Chloramphenicol acetyltransferase-like domain"/>
    <property type="match status" value="4"/>
</dbReference>
<dbReference type="Gene3D" id="3.40.50.12780">
    <property type="entry name" value="N-terminal domain of ligase-like"/>
    <property type="match status" value="2"/>
</dbReference>
<dbReference type="Gene3D" id="3.30.559.30">
    <property type="entry name" value="Nonribosomal peptide synthetase, condensation domain"/>
    <property type="match status" value="4"/>
</dbReference>
<dbReference type="InterPro" id="IPR010071">
    <property type="entry name" value="AA_adenyl_dom"/>
</dbReference>
<dbReference type="InterPro" id="IPR036736">
    <property type="entry name" value="ACP-like_sf"/>
</dbReference>
<dbReference type="InterPro" id="IPR045851">
    <property type="entry name" value="AMP-bd_C_sf"/>
</dbReference>
<dbReference type="InterPro" id="IPR020845">
    <property type="entry name" value="AMP-binding_CS"/>
</dbReference>
<dbReference type="InterPro" id="IPR000873">
    <property type="entry name" value="AMP-dep_synth/lig_dom"/>
</dbReference>
<dbReference type="InterPro" id="IPR042099">
    <property type="entry name" value="ANL_N_sf"/>
</dbReference>
<dbReference type="InterPro" id="IPR023213">
    <property type="entry name" value="CAT-like_dom_sf"/>
</dbReference>
<dbReference type="InterPro" id="IPR001242">
    <property type="entry name" value="Condensatn"/>
</dbReference>
<dbReference type="InterPro" id="IPR020806">
    <property type="entry name" value="PKS_PP-bd"/>
</dbReference>
<dbReference type="InterPro" id="IPR009081">
    <property type="entry name" value="PP-bd_ACP"/>
</dbReference>
<dbReference type="InterPro" id="IPR006162">
    <property type="entry name" value="Ppantetheine_attach_site"/>
</dbReference>
<dbReference type="NCBIfam" id="TIGR01733">
    <property type="entry name" value="AA-adenyl-dom"/>
    <property type="match status" value="2"/>
</dbReference>
<dbReference type="PANTHER" id="PTHR45527:SF1">
    <property type="entry name" value="FATTY ACID SYNTHASE"/>
    <property type="match status" value="1"/>
</dbReference>
<dbReference type="PANTHER" id="PTHR45527">
    <property type="entry name" value="NONRIBOSOMAL PEPTIDE SYNTHETASE"/>
    <property type="match status" value="1"/>
</dbReference>
<dbReference type="Pfam" id="PF00501">
    <property type="entry name" value="AMP-binding"/>
    <property type="match status" value="2"/>
</dbReference>
<dbReference type="Pfam" id="PF00668">
    <property type="entry name" value="Condensation"/>
    <property type="match status" value="4"/>
</dbReference>
<dbReference type="Pfam" id="PF00550">
    <property type="entry name" value="PP-binding"/>
    <property type="match status" value="4"/>
</dbReference>
<dbReference type="SMART" id="SM00823">
    <property type="entry name" value="PKS_PP"/>
    <property type="match status" value="4"/>
</dbReference>
<dbReference type="SUPFAM" id="SSF56801">
    <property type="entry name" value="Acetyl-CoA synthetase-like"/>
    <property type="match status" value="2"/>
</dbReference>
<dbReference type="SUPFAM" id="SSF47336">
    <property type="entry name" value="ACP-like"/>
    <property type="match status" value="4"/>
</dbReference>
<dbReference type="SUPFAM" id="SSF52777">
    <property type="entry name" value="CoA-dependent acyltransferases"/>
    <property type="match status" value="8"/>
</dbReference>
<dbReference type="PROSITE" id="PS00455">
    <property type="entry name" value="AMP_BINDING"/>
    <property type="match status" value="1"/>
</dbReference>
<dbReference type="PROSITE" id="PS50075">
    <property type="entry name" value="CARRIER"/>
    <property type="match status" value="4"/>
</dbReference>
<dbReference type="PROSITE" id="PS00012">
    <property type="entry name" value="PHOSPHOPANTETHEINE"/>
    <property type="match status" value="3"/>
</dbReference>
<comment type="function">
    <text evidence="3 6">Nonribosomal peptide synthetase; part of the gene cluster that mediates the biosynthesis of desferriferrichrome that chelates Fe(3+) to form ferrichrome (PubMed:38340066). Fe(3+) is a key factor for induction of trap formation and the fungus uses the iron chelating desferriferrichrome to sequester Fe(3+) to inhibit trap formation and increase nematicidal activity (PubMed:38340066). The biosynthesis of desferriferrichrome requires the action of the L-ornithine N(5)-oxygenase (LOO) Ao414 that hydroxylates L-ornithine at N(5), resulting in the formation of N(5)-hydroxyl-L-ornithine, which is subsequently N-acetylated to yield N(5)-acetyl-N(5)-hydroxy-L-ornithine (L-AHO). L-AHO harbors one hydroxamate moiety, which is the key core responsible for chelating iron. Then, L-AHO is further condensated with glycines to form desferriferrichrome through the NRPS protein Ao415 (Probable).</text>
</comment>
<comment type="pathway">
    <text evidence="3">Siderophore biosynthesis.</text>
</comment>
<comment type="domain">
    <text evidence="6">NRP synthetases are composed of discrete domains (adenylation (A), thiolation (T) or peptidyl carrier protein (PCP) and condensation (C) domains) which when grouped together are referred to as a single module. Each module is responsible for the recognition (via the A domain) and incorporation of a single amino acid into the growing peptide product. Thus, an NRP synthetase is generally composed of one or more modules and can terminate in a thioesterase domain (TE) that releases the newly synthesized peptide from the enzyme. Occasionally, methyltransferase domains (responsible for amino acid methylation) are present within the NRP synthetase. Ao415 has the following unusual architecture: A-T-C-A-T-C-T-C-T-C, with the two last modules lacking the adenylation domain.</text>
</comment>
<comment type="disruption phenotype">
    <text evidence="3">Impairs the production of desferriferrichrome and ferrichrome and accumulates the precursor L-AHO (PubMed:38340066). Displays sharply decreased conidial formations and exhibits significantly retarded conidial germination (PubMed:38340066). Shows tremendous increases in the nematode-induced trap formation (PubMed:38340066).</text>
</comment>
<comment type="similarity">
    <text evidence="5">Belongs to the NRP synthetase family.</text>
</comment>
<proteinExistence type="inferred from homology"/>
<reference key="1">
    <citation type="journal article" date="2011" name="PLoS Pathog.">
        <title>Genomic and proteomic analyses of the fungus Arthrobotrys oligospora provide insights into nematode-trap formation.</title>
        <authorList>
            <person name="Yang J."/>
            <person name="Wang L."/>
            <person name="Ji X."/>
            <person name="Feng Y."/>
            <person name="Li X."/>
            <person name="Zou C."/>
            <person name="Xu J."/>
            <person name="Ren Y."/>
            <person name="Mi Q."/>
            <person name="Wu J."/>
            <person name="Liu S."/>
            <person name="Liu Y."/>
            <person name="Huang X."/>
            <person name="Wang H."/>
            <person name="Niu X."/>
            <person name="Li J."/>
            <person name="Liang L."/>
            <person name="Luo Y."/>
            <person name="Ji K."/>
            <person name="Zhou W."/>
            <person name="Yu Z."/>
            <person name="Li G."/>
            <person name="Liu Y."/>
            <person name="Li L."/>
            <person name="Qiao M."/>
            <person name="Feng L."/>
            <person name="Zhang K.-Q."/>
        </authorList>
    </citation>
    <scope>NUCLEOTIDE SEQUENCE [LARGE SCALE GENOMIC DNA]</scope>
    <source>
        <strain>ATCC 24927 / CBS 115.81 / DSM 1491</strain>
    </source>
</reference>
<reference key="2">
    <citation type="journal article" date="2024" name="J. Agric. Food Chem.">
        <title>Rare NRPS gene cluster for desferriferrichrome biosynthesis controls the conflict between trap formation and nematicidal activity in Arthrobotrys oligospora.</title>
        <authorList>
            <person name="Zhou J."/>
            <person name="Wang D."/>
            <person name="Wu Q."/>
            <person name="Jiang Y."/>
            <person name="Yan J."/>
            <person name="Wu L."/>
            <person name="Li S."/>
            <person name="Niu X."/>
        </authorList>
    </citation>
    <scope>FUNCTION</scope>
    <scope>DISRUPTION PHENOTYPE</scope>
    <scope>PATHWAY</scope>
</reference>
<keyword id="KW-0436">Ligase</keyword>
<keyword id="KW-0511">Multifunctional enzyme</keyword>
<keyword id="KW-0596">Phosphopantetheine</keyword>
<keyword id="KW-0597">Phosphoprotein</keyword>
<keyword id="KW-1185">Reference proteome</keyword>
<evidence type="ECO:0000255" key="1"/>
<evidence type="ECO:0000255" key="2">
    <source>
        <dbReference type="PROSITE-ProRule" id="PRU00258"/>
    </source>
</evidence>
<evidence type="ECO:0000269" key="3">
    <source>
    </source>
</evidence>
<evidence type="ECO:0000303" key="4">
    <source>
    </source>
</evidence>
<evidence type="ECO:0000305" key="5"/>
<evidence type="ECO:0000305" key="6">
    <source>
    </source>
</evidence>